<reference key="1">
    <citation type="submission" date="2006-04" db="EMBL/GenBank/DDBJ databases">
        <title>Complete sequence of chromosome of Deinococcus geothermalis DSM 11300.</title>
        <authorList>
            <person name="Copeland A."/>
            <person name="Lucas S."/>
            <person name="Lapidus A."/>
            <person name="Barry K."/>
            <person name="Detter J.C."/>
            <person name="Glavina del Rio T."/>
            <person name="Hammon N."/>
            <person name="Israni S."/>
            <person name="Dalin E."/>
            <person name="Tice H."/>
            <person name="Pitluck S."/>
            <person name="Brettin T."/>
            <person name="Bruce D."/>
            <person name="Han C."/>
            <person name="Tapia R."/>
            <person name="Saunders E."/>
            <person name="Gilna P."/>
            <person name="Schmutz J."/>
            <person name="Larimer F."/>
            <person name="Land M."/>
            <person name="Hauser L."/>
            <person name="Kyrpides N."/>
            <person name="Kim E."/>
            <person name="Daly M.J."/>
            <person name="Fredrickson J.K."/>
            <person name="Makarova K.S."/>
            <person name="Gaidamakova E.K."/>
            <person name="Zhai M."/>
            <person name="Richardson P."/>
        </authorList>
    </citation>
    <scope>NUCLEOTIDE SEQUENCE [LARGE SCALE GENOMIC DNA]</scope>
    <source>
        <strain>DSM 11300 / CIP 105573 / AG-3a</strain>
    </source>
</reference>
<evidence type="ECO:0000255" key="1">
    <source>
        <dbReference type="HAMAP-Rule" id="MF_00089"/>
    </source>
</evidence>
<sequence length="609" mass="67341">MSAPTAPQTTLSTAPFPNSEKRYLIGTLYPQVRVPVRAIRQSATLEMIGGLTRQRPNPDVLVPDTSGPYTDPRIHIDLRRGLPHARPWLAADARLEVQAERLSAPLDGAGPLPFPAVPLSRRARSGQAITQMQAARRGEITPEMEFVALRENLRQAEAFELAQQHPGQSFGAAIPREITPEFVRAEVARGRAVIPANVNHPELEPTIIGRNFRVKVNANLGTSIVTSSIEEEVEKMVWATRWGADTVMDLSTGRHIHQTREWILRNSPVPVGTVPIYQALEKVGGVAEELTWEVYRDTLIEQAEQGVDYFTVHAGVRLAHIPLTARRRTGIVSRGGSILAKWCLAHHRENFLYTHFREICEILSAYDITFSLGDGLRPGSIEDANDAAQFAELDTLGELTRVAWEHGVQTMIEGPGHVPMQLIRENMTRQLQVCQEAPFYTLGPLTTDIAPGYDHITSAIGAAQIAWYGTAMLCYVTPKEHLGLPDRQDVRDGVIAYRIAAHAADLAKGHPGAQARDNALSQARFEFRWEDQFNLALDPERARALHDATLPADAAKTAHFCSMCGPHFCSMKLSHDLRADDILNGMAEKAREFRAAGGELYLDRPEGTP</sequence>
<comment type="function">
    <text evidence="1">Catalyzes the synthesis of the hydroxymethylpyrimidine phosphate (HMP-P) moiety of thiamine from aminoimidazole ribotide (AIR) in a radical S-adenosyl-L-methionine (SAM)-dependent reaction.</text>
</comment>
<comment type="catalytic activity">
    <reaction evidence="1">
        <text>5-amino-1-(5-phospho-beta-D-ribosyl)imidazole + S-adenosyl-L-methionine = 4-amino-2-methyl-5-(phosphooxymethyl)pyrimidine + CO + 5'-deoxyadenosine + formate + L-methionine + 3 H(+)</text>
        <dbReference type="Rhea" id="RHEA:24840"/>
        <dbReference type="ChEBI" id="CHEBI:15378"/>
        <dbReference type="ChEBI" id="CHEBI:15740"/>
        <dbReference type="ChEBI" id="CHEBI:17245"/>
        <dbReference type="ChEBI" id="CHEBI:17319"/>
        <dbReference type="ChEBI" id="CHEBI:57844"/>
        <dbReference type="ChEBI" id="CHEBI:58354"/>
        <dbReference type="ChEBI" id="CHEBI:59789"/>
        <dbReference type="ChEBI" id="CHEBI:137981"/>
        <dbReference type="EC" id="4.1.99.17"/>
    </reaction>
</comment>
<comment type="cofactor">
    <cofactor evidence="1">
        <name>[4Fe-4S] cluster</name>
        <dbReference type="ChEBI" id="CHEBI:49883"/>
    </cofactor>
    <text evidence="1">Binds 1 [4Fe-4S] cluster per subunit. The cluster is coordinated with 3 cysteines and an exchangeable S-adenosyl-L-methionine.</text>
</comment>
<comment type="pathway">
    <text evidence="1">Cofactor biosynthesis; thiamine diphosphate biosynthesis.</text>
</comment>
<comment type="similarity">
    <text evidence="1">Belongs to the ThiC family.</text>
</comment>
<gene>
    <name evidence="1" type="primary">thiC</name>
    <name type="ordered locus">Dgeo_1924</name>
</gene>
<proteinExistence type="inferred from homology"/>
<accession>Q1IX15</accession>
<feature type="chain" id="PRO_1000004757" description="Phosphomethylpyrimidine synthase">
    <location>
        <begin position="1"/>
        <end position="609"/>
    </location>
</feature>
<feature type="binding site" evidence="1">
    <location>
        <position position="219"/>
    </location>
    <ligand>
        <name>substrate</name>
    </ligand>
</feature>
<feature type="binding site" evidence="1">
    <location>
        <position position="248"/>
    </location>
    <ligand>
        <name>substrate</name>
    </ligand>
</feature>
<feature type="binding site" evidence="1">
    <location>
        <position position="277"/>
    </location>
    <ligand>
        <name>substrate</name>
    </ligand>
</feature>
<feature type="binding site" evidence="1">
    <location>
        <position position="313"/>
    </location>
    <ligand>
        <name>substrate</name>
    </ligand>
</feature>
<feature type="binding site" evidence="1">
    <location>
        <begin position="333"/>
        <end position="335"/>
    </location>
    <ligand>
        <name>substrate</name>
    </ligand>
</feature>
<feature type="binding site" evidence="1">
    <location>
        <begin position="374"/>
        <end position="377"/>
    </location>
    <ligand>
        <name>substrate</name>
    </ligand>
</feature>
<feature type="binding site" evidence="1">
    <location>
        <position position="413"/>
    </location>
    <ligand>
        <name>substrate</name>
    </ligand>
</feature>
<feature type="binding site" evidence="1">
    <location>
        <position position="417"/>
    </location>
    <ligand>
        <name>Zn(2+)</name>
        <dbReference type="ChEBI" id="CHEBI:29105"/>
    </ligand>
</feature>
<feature type="binding site" evidence="1">
    <location>
        <position position="440"/>
    </location>
    <ligand>
        <name>substrate</name>
    </ligand>
</feature>
<feature type="binding site" evidence="1">
    <location>
        <position position="481"/>
    </location>
    <ligand>
        <name>Zn(2+)</name>
        <dbReference type="ChEBI" id="CHEBI:29105"/>
    </ligand>
</feature>
<feature type="binding site" evidence="1">
    <location>
        <position position="561"/>
    </location>
    <ligand>
        <name>[4Fe-4S] cluster</name>
        <dbReference type="ChEBI" id="CHEBI:49883"/>
        <note>4Fe-4S-S-AdoMet</note>
    </ligand>
</feature>
<feature type="binding site" evidence="1">
    <location>
        <position position="564"/>
    </location>
    <ligand>
        <name>[4Fe-4S] cluster</name>
        <dbReference type="ChEBI" id="CHEBI:49883"/>
        <note>4Fe-4S-S-AdoMet</note>
    </ligand>
</feature>
<feature type="binding site" evidence="1">
    <location>
        <position position="569"/>
    </location>
    <ligand>
        <name>[4Fe-4S] cluster</name>
        <dbReference type="ChEBI" id="CHEBI:49883"/>
        <note>4Fe-4S-S-AdoMet</note>
    </ligand>
</feature>
<name>THIC_DEIGD</name>
<keyword id="KW-0004">4Fe-4S</keyword>
<keyword id="KW-0408">Iron</keyword>
<keyword id="KW-0411">Iron-sulfur</keyword>
<keyword id="KW-0456">Lyase</keyword>
<keyword id="KW-0479">Metal-binding</keyword>
<keyword id="KW-0949">S-adenosyl-L-methionine</keyword>
<keyword id="KW-0784">Thiamine biosynthesis</keyword>
<keyword id="KW-0862">Zinc</keyword>
<organism>
    <name type="scientific">Deinococcus geothermalis (strain DSM 11300 / CIP 105573 / AG-3a)</name>
    <dbReference type="NCBI Taxonomy" id="319795"/>
    <lineage>
        <taxon>Bacteria</taxon>
        <taxon>Thermotogati</taxon>
        <taxon>Deinococcota</taxon>
        <taxon>Deinococci</taxon>
        <taxon>Deinococcales</taxon>
        <taxon>Deinococcaceae</taxon>
        <taxon>Deinococcus</taxon>
    </lineage>
</organism>
<dbReference type="EC" id="4.1.99.17" evidence="1"/>
<dbReference type="EMBL" id="CP000359">
    <property type="protein sequence ID" value="ABF46219.1"/>
    <property type="molecule type" value="Genomic_DNA"/>
</dbReference>
<dbReference type="RefSeq" id="WP_011531046.1">
    <property type="nucleotide sequence ID" value="NC_008025.1"/>
</dbReference>
<dbReference type="SMR" id="Q1IX15"/>
<dbReference type="STRING" id="319795.Dgeo_1924"/>
<dbReference type="KEGG" id="dge:Dgeo_1924"/>
<dbReference type="eggNOG" id="COG0422">
    <property type="taxonomic scope" value="Bacteria"/>
</dbReference>
<dbReference type="HOGENOM" id="CLU_013181_2_1_0"/>
<dbReference type="UniPathway" id="UPA00060"/>
<dbReference type="Proteomes" id="UP000002431">
    <property type="component" value="Chromosome"/>
</dbReference>
<dbReference type="GO" id="GO:0005829">
    <property type="term" value="C:cytosol"/>
    <property type="evidence" value="ECO:0007669"/>
    <property type="project" value="TreeGrafter"/>
</dbReference>
<dbReference type="GO" id="GO:0051539">
    <property type="term" value="F:4 iron, 4 sulfur cluster binding"/>
    <property type="evidence" value="ECO:0007669"/>
    <property type="project" value="UniProtKB-KW"/>
</dbReference>
<dbReference type="GO" id="GO:0016830">
    <property type="term" value="F:carbon-carbon lyase activity"/>
    <property type="evidence" value="ECO:0007669"/>
    <property type="project" value="InterPro"/>
</dbReference>
<dbReference type="GO" id="GO:0008270">
    <property type="term" value="F:zinc ion binding"/>
    <property type="evidence" value="ECO:0007669"/>
    <property type="project" value="UniProtKB-UniRule"/>
</dbReference>
<dbReference type="GO" id="GO:0009228">
    <property type="term" value="P:thiamine biosynthetic process"/>
    <property type="evidence" value="ECO:0007669"/>
    <property type="project" value="UniProtKB-KW"/>
</dbReference>
<dbReference type="GO" id="GO:0009229">
    <property type="term" value="P:thiamine diphosphate biosynthetic process"/>
    <property type="evidence" value="ECO:0007669"/>
    <property type="project" value="UniProtKB-UniRule"/>
</dbReference>
<dbReference type="FunFam" id="3.20.20.540:FF:000001">
    <property type="entry name" value="Phosphomethylpyrimidine synthase"/>
    <property type="match status" value="1"/>
</dbReference>
<dbReference type="Gene3D" id="6.10.250.620">
    <property type="match status" value="1"/>
</dbReference>
<dbReference type="Gene3D" id="3.20.20.540">
    <property type="entry name" value="Radical SAM ThiC family, central domain"/>
    <property type="match status" value="1"/>
</dbReference>
<dbReference type="HAMAP" id="MF_00089">
    <property type="entry name" value="ThiC"/>
    <property type="match status" value="1"/>
</dbReference>
<dbReference type="InterPro" id="IPR037509">
    <property type="entry name" value="ThiC"/>
</dbReference>
<dbReference type="InterPro" id="IPR025747">
    <property type="entry name" value="ThiC-associated_dom"/>
</dbReference>
<dbReference type="InterPro" id="IPR038521">
    <property type="entry name" value="ThiC/Bza_core_dom"/>
</dbReference>
<dbReference type="InterPro" id="IPR002817">
    <property type="entry name" value="ThiC/BzaA/B"/>
</dbReference>
<dbReference type="NCBIfam" id="NF006763">
    <property type="entry name" value="PRK09284.1"/>
    <property type="match status" value="1"/>
</dbReference>
<dbReference type="NCBIfam" id="NF009895">
    <property type="entry name" value="PRK13352.1"/>
    <property type="match status" value="1"/>
</dbReference>
<dbReference type="NCBIfam" id="TIGR00190">
    <property type="entry name" value="thiC"/>
    <property type="match status" value="1"/>
</dbReference>
<dbReference type="PANTHER" id="PTHR30557:SF1">
    <property type="entry name" value="PHOSPHOMETHYLPYRIMIDINE SYNTHASE, CHLOROPLASTIC"/>
    <property type="match status" value="1"/>
</dbReference>
<dbReference type="PANTHER" id="PTHR30557">
    <property type="entry name" value="THIAMINE BIOSYNTHESIS PROTEIN THIC"/>
    <property type="match status" value="1"/>
</dbReference>
<dbReference type="Pfam" id="PF13667">
    <property type="entry name" value="ThiC-associated"/>
    <property type="match status" value="1"/>
</dbReference>
<dbReference type="Pfam" id="PF01964">
    <property type="entry name" value="ThiC_Rad_SAM"/>
    <property type="match status" value="1"/>
</dbReference>
<dbReference type="SFLD" id="SFLDF00407">
    <property type="entry name" value="phosphomethylpyrimidine_syntha"/>
    <property type="match status" value="1"/>
</dbReference>
<dbReference type="SFLD" id="SFLDG01114">
    <property type="entry name" value="phosphomethylpyrimidine_syntha"/>
    <property type="match status" value="1"/>
</dbReference>
<dbReference type="SFLD" id="SFLDS00113">
    <property type="entry name" value="Radical_SAM_Phosphomethylpyrim"/>
    <property type="match status" value="1"/>
</dbReference>
<protein>
    <recommendedName>
        <fullName evidence="1">Phosphomethylpyrimidine synthase</fullName>
        <ecNumber evidence="1">4.1.99.17</ecNumber>
    </recommendedName>
    <alternativeName>
        <fullName evidence="1">Hydroxymethylpyrimidine phosphate synthase</fullName>
        <shortName evidence="1">HMP-P synthase</shortName>
        <shortName evidence="1">HMP-phosphate synthase</shortName>
        <shortName evidence="1">HMPP synthase</shortName>
    </alternativeName>
    <alternativeName>
        <fullName evidence="1">Thiamine biosynthesis protein ThiC</fullName>
    </alternativeName>
</protein>